<evidence type="ECO:0000269" key="1">
    <source>
    </source>
</evidence>
<evidence type="ECO:0000305" key="2"/>
<keyword id="KW-0027">Amidation</keyword>
<keyword id="KW-0903">Direct protein sequencing</keyword>
<keyword id="KW-0527">Neuropeptide</keyword>
<keyword id="KW-0964">Secreted</keyword>
<sequence>FMRF</sequence>
<name>FMRF_PLATR</name>
<reference key="1">
    <citation type="journal article" date="1994" name="Peptides">
        <title>FMRFamide-related peptides from the kidney of the snail, Helisoma trivolvis.</title>
        <authorList>
            <person name="Madrid K.P."/>
            <person name="Price D.A."/>
            <person name="Greenberg M.J."/>
            <person name="Khan H.R."/>
            <person name="Saleuddin A.S.M."/>
        </authorList>
    </citation>
    <scope>PROTEIN SEQUENCE</scope>
    <scope>AMIDATION AT PHE-4</scope>
    <source>
        <tissue>Kidney</tissue>
    </source>
</reference>
<organism>
    <name type="scientific">Planorbella trivolvis</name>
    <name type="common">Marsh rams-horn</name>
    <name type="synonym">Helisoma trivolvis</name>
    <dbReference type="NCBI Taxonomy" id="283763"/>
    <lineage>
        <taxon>Eukaryota</taxon>
        <taxon>Metazoa</taxon>
        <taxon>Spiralia</taxon>
        <taxon>Lophotrochozoa</taxon>
        <taxon>Mollusca</taxon>
        <taxon>Gastropoda</taxon>
        <taxon>Heterobranchia</taxon>
        <taxon>Euthyneura</taxon>
        <taxon>Panpulmonata</taxon>
        <taxon>Hygrophila</taxon>
        <taxon>Lymnaeoidea</taxon>
        <taxon>Planorbidae</taxon>
        <taxon>Planorbella</taxon>
    </lineage>
</organism>
<accession>P69148</accession>
<accession>P01162</accession>
<proteinExistence type="evidence at protein level"/>
<protein>
    <recommendedName>
        <fullName>FMRFamide</fullName>
    </recommendedName>
</protein>
<dbReference type="SMR" id="P69148"/>
<dbReference type="GO" id="GO:0005576">
    <property type="term" value="C:extracellular region"/>
    <property type="evidence" value="ECO:0007669"/>
    <property type="project" value="UniProtKB-SubCell"/>
</dbReference>
<dbReference type="GO" id="GO:0007218">
    <property type="term" value="P:neuropeptide signaling pathway"/>
    <property type="evidence" value="ECO:0007669"/>
    <property type="project" value="UniProtKB-KW"/>
</dbReference>
<feature type="peptide" id="PRO_0000043647" description="FMRFamide">
    <location>
        <begin position="1"/>
        <end position="4"/>
    </location>
</feature>
<feature type="modified residue" description="Phenylalanine amide" evidence="1">
    <location>
        <position position="4"/>
    </location>
</feature>
<comment type="function">
    <text>Myoactive; cardioexcitatory substance. Pharmacological activities include augmentation, induction, and regularization of cardiac contraction.</text>
</comment>
<comment type="subcellular location">
    <subcellularLocation>
        <location>Secreted</location>
    </subcellularLocation>
</comment>
<comment type="similarity">
    <text evidence="2">Belongs to the FARP (FMRFamide related peptide) family.</text>
</comment>